<reference key="1">
    <citation type="submission" date="2005-11" db="EMBL/GenBank/DDBJ databases">
        <title>The complete genome sequence of Lawsonia intracellularis: the causative agent of proliferative enteropathy.</title>
        <authorList>
            <person name="Kaur K."/>
            <person name="Zhang Q."/>
            <person name="Beckler D."/>
            <person name="Munir S."/>
            <person name="Li L."/>
            <person name="Kinsley K."/>
            <person name="Herron L."/>
            <person name="Peterson A."/>
            <person name="May B."/>
            <person name="Singh S."/>
            <person name="Gebhart C."/>
            <person name="Kapur V."/>
        </authorList>
    </citation>
    <scope>NUCLEOTIDE SEQUENCE [LARGE SCALE GENOMIC DNA]</scope>
    <source>
        <strain>PHE/MN1-00</strain>
    </source>
</reference>
<comment type="function">
    <text evidence="1">An essential GTPase which binds GTP, GDP and possibly (p)ppGpp with moderate affinity, with high nucleotide exchange rates and a fairly low GTP hydrolysis rate. Plays a role in control of the cell cycle, stress response, ribosome biogenesis and in those bacteria that undergo differentiation, in morphogenesis control.</text>
</comment>
<comment type="cofactor">
    <cofactor evidence="1">
        <name>Mg(2+)</name>
        <dbReference type="ChEBI" id="CHEBI:18420"/>
    </cofactor>
</comment>
<comment type="subunit">
    <text evidence="1">Monomer.</text>
</comment>
<comment type="subcellular location">
    <subcellularLocation>
        <location evidence="1">Cytoplasm</location>
    </subcellularLocation>
</comment>
<comment type="similarity">
    <text evidence="1">Belongs to the TRAFAC class OBG-HflX-like GTPase superfamily. OBG GTPase family.</text>
</comment>
<name>OBG_LAWIP</name>
<evidence type="ECO:0000255" key="1">
    <source>
        <dbReference type="HAMAP-Rule" id="MF_01454"/>
    </source>
</evidence>
<evidence type="ECO:0000255" key="2">
    <source>
        <dbReference type="PROSITE-ProRule" id="PRU01231"/>
    </source>
</evidence>
<keyword id="KW-0963">Cytoplasm</keyword>
<keyword id="KW-0342">GTP-binding</keyword>
<keyword id="KW-0378">Hydrolase</keyword>
<keyword id="KW-0460">Magnesium</keyword>
<keyword id="KW-0479">Metal-binding</keyword>
<keyword id="KW-0547">Nucleotide-binding</keyword>
<keyword id="KW-1185">Reference proteome</keyword>
<accession>Q1MQQ1</accession>
<organism>
    <name type="scientific">Lawsonia intracellularis (strain PHE/MN1-00)</name>
    <dbReference type="NCBI Taxonomy" id="363253"/>
    <lineage>
        <taxon>Bacteria</taxon>
        <taxon>Pseudomonadati</taxon>
        <taxon>Thermodesulfobacteriota</taxon>
        <taxon>Desulfovibrionia</taxon>
        <taxon>Desulfovibrionales</taxon>
        <taxon>Desulfovibrionaceae</taxon>
        <taxon>Lawsonia</taxon>
    </lineage>
</organism>
<dbReference type="EC" id="3.6.5.-" evidence="1"/>
<dbReference type="EMBL" id="AM180252">
    <property type="protein sequence ID" value="CAJ54676.1"/>
    <property type="molecule type" value="Genomic_DNA"/>
</dbReference>
<dbReference type="RefSeq" id="WP_011526705.1">
    <property type="nucleotide sequence ID" value="NC_008011.1"/>
</dbReference>
<dbReference type="SMR" id="Q1MQQ1"/>
<dbReference type="STRING" id="363253.LI0622"/>
<dbReference type="KEGG" id="lip:LI0622"/>
<dbReference type="eggNOG" id="COG0536">
    <property type="taxonomic scope" value="Bacteria"/>
</dbReference>
<dbReference type="HOGENOM" id="CLU_011747_2_0_7"/>
<dbReference type="OrthoDB" id="9807318at2"/>
<dbReference type="Proteomes" id="UP000002430">
    <property type="component" value="Chromosome"/>
</dbReference>
<dbReference type="GO" id="GO:0005737">
    <property type="term" value="C:cytoplasm"/>
    <property type="evidence" value="ECO:0007669"/>
    <property type="project" value="UniProtKB-SubCell"/>
</dbReference>
<dbReference type="GO" id="GO:0005525">
    <property type="term" value="F:GTP binding"/>
    <property type="evidence" value="ECO:0007669"/>
    <property type="project" value="UniProtKB-UniRule"/>
</dbReference>
<dbReference type="GO" id="GO:0003924">
    <property type="term" value="F:GTPase activity"/>
    <property type="evidence" value="ECO:0007669"/>
    <property type="project" value="UniProtKB-UniRule"/>
</dbReference>
<dbReference type="GO" id="GO:0000287">
    <property type="term" value="F:magnesium ion binding"/>
    <property type="evidence" value="ECO:0007669"/>
    <property type="project" value="InterPro"/>
</dbReference>
<dbReference type="GO" id="GO:0042254">
    <property type="term" value="P:ribosome biogenesis"/>
    <property type="evidence" value="ECO:0007669"/>
    <property type="project" value="UniProtKB-UniRule"/>
</dbReference>
<dbReference type="CDD" id="cd01898">
    <property type="entry name" value="Obg"/>
    <property type="match status" value="1"/>
</dbReference>
<dbReference type="FunFam" id="2.70.210.12:FF:000001">
    <property type="entry name" value="GTPase Obg"/>
    <property type="match status" value="1"/>
</dbReference>
<dbReference type="Gene3D" id="2.70.210.12">
    <property type="entry name" value="GTP1/OBG domain"/>
    <property type="match status" value="1"/>
</dbReference>
<dbReference type="Gene3D" id="3.40.50.300">
    <property type="entry name" value="P-loop containing nucleotide triphosphate hydrolases"/>
    <property type="match status" value="1"/>
</dbReference>
<dbReference type="HAMAP" id="MF_01454">
    <property type="entry name" value="GTPase_Obg"/>
    <property type="match status" value="1"/>
</dbReference>
<dbReference type="InterPro" id="IPR031167">
    <property type="entry name" value="G_OBG"/>
</dbReference>
<dbReference type="InterPro" id="IPR006073">
    <property type="entry name" value="GTP-bd"/>
</dbReference>
<dbReference type="InterPro" id="IPR014100">
    <property type="entry name" value="GTP-bd_Obg/CgtA"/>
</dbReference>
<dbReference type="InterPro" id="IPR006074">
    <property type="entry name" value="GTP1-OBG_CS"/>
</dbReference>
<dbReference type="InterPro" id="IPR006169">
    <property type="entry name" value="GTP1_OBG_dom"/>
</dbReference>
<dbReference type="InterPro" id="IPR036726">
    <property type="entry name" value="GTP1_OBG_dom_sf"/>
</dbReference>
<dbReference type="InterPro" id="IPR045086">
    <property type="entry name" value="OBG_GTPase"/>
</dbReference>
<dbReference type="InterPro" id="IPR027417">
    <property type="entry name" value="P-loop_NTPase"/>
</dbReference>
<dbReference type="InterPro" id="IPR005225">
    <property type="entry name" value="Small_GTP-bd"/>
</dbReference>
<dbReference type="NCBIfam" id="TIGR02729">
    <property type="entry name" value="Obg_CgtA"/>
    <property type="match status" value="1"/>
</dbReference>
<dbReference type="NCBIfam" id="NF008955">
    <property type="entry name" value="PRK12297.1"/>
    <property type="match status" value="1"/>
</dbReference>
<dbReference type="NCBIfam" id="NF008956">
    <property type="entry name" value="PRK12299.1"/>
    <property type="match status" value="1"/>
</dbReference>
<dbReference type="NCBIfam" id="TIGR00231">
    <property type="entry name" value="small_GTP"/>
    <property type="match status" value="1"/>
</dbReference>
<dbReference type="PANTHER" id="PTHR11702">
    <property type="entry name" value="DEVELOPMENTALLY REGULATED GTP-BINDING PROTEIN-RELATED"/>
    <property type="match status" value="1"/>
</dbReference>
<dbReference type="PANTHER" id="PTHR11702:SF31">
    <property type="entry name" value="MITOCHONDRIAL RIBOSOME-ASSOCIATED GTPASE 2"/>
    <property type="match status" value="1"/>
</dbReference>
<dbReference type="Pfam" id="PF01018">
    <property type="entry name" value="GTP1_OBG"/>
    <property type="match status" value="1"/>
</dbReference>
<dbReference type="Pfam" id="PF01926">
    <property type="entry name" value="MMR_HSR1"/>
    <property type="match status" value="1"/>
</dbReference>
<dbReference type="PIRSF" id="PIRSF002401">
    <property type="entry name" value="GTP_bd_Obg/CgtA"/>
    <property type="match status" value="1"/>
</dbReference>
<dbReference type="PRINTS" id="PR00326">
    <property type="entry name" value="GTP1OBG"/>
</dbReference>
<dbReference type="SUPFAM" id="SSF82051">
    <property type="entry name" value="Obg GTP-binding protein N-terminal domain"/>
    <property type="match status" value="1"/>
</dbReference>
<dbReference type="SUPFAM" id="SSF52540">
    <property type="entry name" value="P-loop containing nucleoside triphosphate hydrolases"/>
    <property type="match status" value="1"/>
</dbReference>
<dbReference type="PROSITE" id="PS51710">
    <property type="entry name" value="G_OBG"/>
    <property type="match status" value="1"/>
</dbReference>
<dbReference type="PROSITE" id="PS00905">
    <property type="entry name" value="GTP1_OBG"/>
    <property type="match status" value="1"/>
</dbReference>
<dbReference type="PROSITE" id="PS51883">
    <property type="entry name" value="OBG"/>
    <property type="match status" value="1"/>
</dbReference>
<gene>
    <name evidence="1" type="primary">obg</name>
    <name type="ordered locus">LI0622</name>
</gene>
<sequence length="364" mass="40445">MRFVDEVTISVSAGKGGNGCVSFRREKFIPKGGPNGGDGGDGGNIIFKADSRLLTLYDFRVQRHYRAQNGEGGKGSQRHGKKGEDLILHLPVGTIIFEQLLDKEYFLVDLDRPGVEFLIARGGRGGKGNEHFKSSTMRTPRFAQKGEMGEEKYLRLELKILADAGIIGLPNAGKSTLISKLSAAQPKIAAYPFTTLNPNLGVMIDNLDPDKRLVLADIPGLIEGACKGQGLGHQFLKHIERTRFLIHVLSSEDIDEDNPWLGFDIVNEELKEFDHTLMQRTQLLVVNKIDVLQPEKLSHIKQVAESSGKIIYFISAETGEGIELLVDAIWKLQSYRLNAPFIHLKPIEHKSDEEFAIEVAYTKE</sequence>
<feature type="chain" id="PRO_0000386007" description="GTPase Obg">
    <location>
        <begin position="1"/>
        <end position="364"/>
    </location>
</feature>
<feature type="domain" description="Obg" evidence="2">
    <location>
        <begin position="1"/>
        <end position="161"/>
    </location>
</feature>
<feature type="domain" description="OBG-type G" evidence="1">
    <location>
        <begin position="162"/>
        <end position="334"/>
    </location>
</feature>
<feature type="binding site" evidence="1">
    <location>
        <begin position="168"/>
        <end position="175"/>
    </location>
    <ligand>
        <name>GTP</name>
        <dbReference type="ChEBI" id="CHEBI:37565"/>
    </ligand>
</feature>
<feature type="binding site" evidence="1">
    <location>
        <position position="175"/>
    </location>
    <ligand>
        <name>Mg(2+)</name>
        <dbReference type="ChEBI" id="CHEBI:18420"/>
    </ligand>
</feature>
<feature type="binding site" evidence="1">
    <location>
        <begin position="193"/>
        <end position="197"/>
    </location>
    <ligand>
        <name>GTP</name>
        <dbReference type="ChEBI" id="CHEBI:37565"/>
    </ligand>
</feature>
<feature type="binding site" evidence="1">
    <location>
        <position position="195"/>
    </location>
    <ligand>
        <name>Mg(2+)</name>
        <dbReference type="ChEBI" id="CHEBI:18420"/>
    </ligand>
</feature>
<feature type="binding site" evidence="1">
    <location>
        <begin position="217"/>
        <end position="220"/>
    </location>
    <ligand>
        <name>GTP</name>
        <dbReference type="ChEBI" id="CHEBI:37565"/>
    </ligand>
</feature>
<feature type="binding site" evidence="1">
    <location>
        <begin position="287"/>
        <end position="290"/>
    </location>
    <ligand>
        <name>GTP</name>
        <dbReference type="ChEBI" id="CHEBI:37565"/>
    </ligand>
</feature>
<feature type="binding site" evidence="1">
    <location>
        <begin position="315"/>
        <end position="317"/>
    </location>
    <ligand>
        <name>GTP</name>
        <dbReference type="ChEBI" id="CHEBI:37565"/>
    </ligand>
</feature>
<proteinExistence type="inferred from homology"/>
<protein>
    <recommendedName>
        <fullName evidence="1">GTPase Obg</fullName>
        <ecNumber evidence="1">3.6.5.-</ecNumber>
    </recommendedName>
    <alternativeName>
        <fullName evidence="1">GTP-binding protein Obg</fullName>
    </alternativeName>
</protein>